<feature type="chain" id="PRO_0000066855" description="Potassium channel toxin gamma-KTx 3.3">
    <location>
        <begin position="1"/>
        <end position="43"/>
    </location>
</feature>
<feature type="disulfide bond" evidence="3">
    <location>
        <begin position="5"/>
        <end position="23"/>
    </location>
</feature>
<feature type="disulfide bond" evidence="3">
    <location>
        <begin position="11"/>
        <end position="34"/>
    </location>
</feature>
<feature type="disulfide bond" evidence="3">
    <location>
        <begin position="20"/>
        <end position="39"/>
    </location>
</feature>
<feature type="disulfide bond" evidence="3">
    <location>
        <begin position="24"/>
        <end position="41"/>
    </location>
</feature>
<name>KGX33_CENSC</name>
<reference key="1">
    <citation type="journal article" date="2002" name="FEBS Lett.">
        <title>A large number of novel Ergtoxin-like genes and ERG K+-channels blocking peptides from scorpions of the genus Centruroides.</title>
        <authorList>
            <person name="Corona M."/>
            <person name="Gurrola G.B."/>
            <person name="Merino E."/>
            <person name="Cassulini R.R."/>
            <person name="Valdez-Cruz N.A."/>
            <person name="Garcia B."/>
            <person name="Ramirez-Dominguez M.E."/>
            <person name="Coronas F.I."/>
            <person name="Zamudio F.Z."/>
            <person name="Wanke E."/>
            <person name="Possani L.D."/>
        </authorList>
    </citation>
    <scope>NUCLEOTIDE SEQUENCE [MRNA]</scope>
    <scope>NOMENCLATURE</scope>
    <source>
        <tissue>Venom gland</tissue>
    </source>
</reference>
<keyword id="KW-1015">Disulfide bond</keyword>
<keyword id="KW-0872">Ion channel impairing toxin</keyword>
<keyword id="KW-0960">Knottin</keyword>
<keyword id="KW-0528">Neurotoxin</keyword>
<keyword id="KW-0632">Potassium channel impairing toxin</keyword>
<keyword id="KW-0964">Secreted</keyword>
<keyword id="KW-0800">Toxin</keyword>
<keyword id="KW-1220">Voltage-gated potassium channel impairing toxin</keyword>
<protein>
    <recommendedName>
        <fullName evidence="4">Potassium channel toxin gamma-KTx 3.3</fullName>
    </recommendedName>
    <alternativeName>
        <fullName evidence="5">CsErgTx2</fullName>
        <shortName evidence="4">CsErg2</shortName>
        <shortName evidence="4">ErgTx2</shortName>
    </alternativeName>
    <alternativeName>
        <fullName evidence="4">Ergtoxin-like protein</fullName>
    </alternativeName>
</protein>
<accession>Q86QU5</accession>
<evidence type="ECO:0000250" key="1"/>
<evidence type="ECO:0000250" key="2">
    <source>
        <dbReference type="UniProtKB" id="P59939"/>
    </source>
</evidence>
<evidence type="ECO:0000250" key="3">
    <source>
        <dbReference type="UniProtKB" id="Q86QT3"/>
    </source>
</evidence>
<evidence type="ECO:0000303" key="4">
    <source>
    </source>
</evidence>
<evidence type="ECO:0000305" key="5"/>
<dbReference type="EMBL" id="AY159348">
    <property type="protein sequence ID" value="AAO22226.1"/>
    <property type="molecule type" value="mRNA"/>
</dbReference>
<dbReference type="SMR" id="Q86QU5"/>
<dbReference type="GO" id="GO:0005576">
    <property type="term" value="C:extracellular region"/>
    <property type="evidence" value="ECO:0007669"/>
    <property type="project" value="UniProtKB-SubCell"/>
</dbReference>
<dbReference type="GO" id="GO:0019870">
    <property type="term" value="F:potassium channel inhibitor activity"/>
    <property type="evidence" value="ECO:0007669"/>
    <property type="project" value="InterPro"/>
</dbReference>
<dbReference type="GO" id="GO:0090729">
    <property type="term" value="F:toxin activity"/>
    <property type="evidence" value="ECO:0007669"/>
    <property type="project" value="UniProtKB-KW"/>
</dbReference>
<dbReference type="Gene3D" id="3.30.30.10">
    <property type="entry name" value="Knottin, scorpion toxin-like"/>
    <property type="match status" value="1"/>
</dbReference>
<dbReference type="InterPro" id="IPR012622">
    <property type="entry name" value="Ergtoxin"/>
</dbReference>
<dbReference type="InterPro" id="IPR036574">
    <property type="entry name" value="Scorpion_toxin-like_sf"/>
</dbReference>
<dbReference type="Pfam" id="PF08086">
    <property type="entry name" value="Toxin_17"/>
    <property type="match status" value="1"/>
</dbReference>
<dbReference type="SUPFAM" id="SSF57095">
    <property type="entry name" value="Scorpion toxin-like"/>
    <property type="match status" value="1"/>
</dbReference>
<dbReference type="PROSITE" id="PS60026">
    <property type="entry name" value="ERGTX"/>
    <property type="match status" value="1"/>
</dbReference>
<proteinExistence type="inferred from homology"/>
<organism>
    <name type="scientific">Centruroides sculpturatus</name>
    <name type="common">Arizona bark scorpion</name>
    <dbReference type="NCBI Taxonomy" id="218467"/>
    <lineage>
        <taxon>Eukaryota</taxon>
        <taxon>Metazoa</taxon>
        <taxon>Ecdysozoa</taxon>
        <taxon>Arthropoda</taxon>
        <taxon>Chelicerata</taxon>
        <taxon>Arachnida</taxon>
        <taxon>Scorpiones</taxon>
        <taxon>Buthida</taxon>
        <taxon>Buthoidea</taxon>
        <taxon>Buthidae</taxon>
        <taxon>Centruroides</taxon>
    </lineage>
</organism>
<comment type="function">
    <text evidence="2">Blocks Kv11/ERG potassium channels.</text>
</comment>
<comment type="subcellular location">
    <subcellularLocation>
        <location evidence="2">Secreted</location>
    </subcellularLocation>
</comment>
<comment type="tissue specificity">
    <text evidence="5">Expressed by the venom gland.</text>
</comment>
<comment type="domain">
    <text evidence="1">The presence of a 'disulfide through disulfide knot' structurally defines this protein as a knottin.</text>
</comment>
<comment type="domain">
    <text evidence="3">Has the CSalpha/beta fold, which comprises one or two short alpha helices connected to anti-parallel beta-sheets stabilized by three or four disulfide bonds.</text>
</comment>
<comment type="similarity">
    <text evidence="5">Belongs to the ergtoxin family. Gamma-KTx 3 subfamily.</text>
</comment>
<sequence length="43" mass="4848">DRDSCVDKSRCAKYGYYGQCEVCCKKAGHRGGTCDFFKCKCKV</sequence>